<dbReference type="PIR" id="S00314">
    <property type="entry name" value="S00314"/>
</dbReference>
<dbReference type="GO" id="GO:0009535">
    <property type="term" value="C:chloroplast thylakoid membrane"/>
    <property type="evidence" value="ECO:0007669"/>
    <property type="project" value="UniProtKB-SubCell"/>
</dbReference>
<dbReference type="GO" id="GO:0009522">
    <property type="term" value="C:photosystem I"/>
    <property type="evidence" value="ECO:0007669"/>
    <property type="project" value="UniProtKB-KW"/>
</dbReference>
<dbReference type="GO" id="GO:0015979">
    <property type="term" value="P:photosynthesis"/>
    <property type="evidence" value="ECO:0007669"/>
    <property type="project" value="UniProtKB-KW"/>
</dbReference>
<protein>
    <recommendedName>
        <fullName>Photosystem I reaction center subunit II</fullName>
    </recommendedName>
    <alternativeName>
        <fullName>Photosystem I 21 kDa subunit</fullName>
        <shortName>PSI-D</shortName>
    </alternativeName>
</protein>
<sequence length="36" mass="3767">XTEDKTDAATDVATXEAPVGFTPXELDPNTXSXIFG</sequence>
<feature type="chain" id="PRO_0000206058" description="Photosystem I reaction center subunit II">
    <location>
        <begin position="1"/>
        <end position="36" status="greater than"/>
    </location>
</feature>
<feature type="non-terminal residue">
    <location>
        <position position="36"/>
    </location>
</feature>
<accession>P20117</accession>
<name>PSAD_PEA</name>
<comment type="function">
    <text>PsaD can form complexes with ferredoxin and ferredoxin-oxidoreductase in photosystem I (PS I) reaction center. PSAD may encode the ferredoxin-docking protein.</text>
</comment>
<comment type="subcellular location">
    <subcellularLocation>
        <location evidence="1">Plastid</location>
        <location evidence="1">Chloroplast thylakoid membrane</location>
        <topology evidence="1">Peripheral membrane protein</topology>
        <orientation evidence="1">Stromal side</orientation>
    </subcellularLocation>
</comment>
<comment type="similarity">
    <text evidence="2">Belongs to the PsaD family.</text>
</comment>
<evidence type="ECO:0000250" key="1"/>
<evidence type="ECO:0000305" key="2"/>
<keyword id="KW-0150">Chloroplast</keyword>
<keyword id="KW-0903">Direct protein sequencing</keyword>
<keyword id="KW-0472">Membrane</keyword>
<keyword id="KW-0602">Photosynthesis</keyword>
<keyword id="KW-0603">Photosystem I</keyword>
<keyword id="KW-0934">Plastid</keyword>
<keyword id="KW-0793">Thylakoid</keyword>
<organism>
    <name type="scientific">Pisum sativum</name>
    <name type="common">Garden pea</name>
    <name type="synonym">Lathyrus oleraceus</name>
    <dbReference type="NCBI Taxonomy" id="3888"/>
    <lineage>
        <taxon>Eukaryota</taxon>
        <taxon>Viridiplantae</taxon>
        <taxon>Streptophyta</taxon>
        <taxon>Embryophyta</taxon>
        <taxon>Tracheophyta</taxon>
        <taxon>Spermatophyta</taxon>
        <taxon>Magnoliopsida</taxon>
        <taxon>eudicotyledons</taxon>
        <taxon>Gunneridae</taxon>
        <taxon>Pentapetalae</taxon>
        <taxon>rosids</taxon>
        <taxon>fabids</taxon>
        <taxon>Fabales</taxon>
        <taxon>Fabaceae</taxon>
        <taxon>Papilionoideae</taxon>
        <taxon>50 kb inversion clade</taxon>
        <taxon>NPAAA clade</taxon>
        <taxon>Hologalegina</taxon>
        <taxon>IRL clade</taxon>
        <taxon>Fabeae</taxon>
        <taxon>Pisum</taxon>
    </lineage>
</organism>
<gene>
    <name type="primary">psaD</name>
</gene>
<reference key="1">
    <citation type="journal article" date="1988" name="FEBS Lett.">
        <title>N-terminal amino acid sequence analysis of the subunits of pea photosystem I.</title>
        <authorList>
            <person name="Dunn P.P.J."/>
            <person name="Packman L.C."/>
            <person name="Pappin D."/>
            <person name="Gray J.C."/>
        </authorList>
    </citation>
    <scope>PROTEIN SEQUENCE</scope>
</reference>
<proteinExistence type="evidence at protein level"/>